<comment type="subcellular location">
    <subcellularLocation>
        <location evidence="2">Secreted</location>
    </subcellularLocation>
</comment>
<comment type="similarity">
    <text evidence="2">Belongs to the MYDGF family.</text>
</comment>
<dbReference type="EMBL" id="AAFI02000026">
    <property type="protein sequence ID" value="EAL67945.2"/>
    <property type="molecule type" value="Genomic_DNA"/>
</dbReference>
<dbReference type="RefSeq" id="XP_641937.2">
    <property type="nucleotide sequence ID" value="XM_636845.2"/>
</dbReference>
<dbReference type="SMR" id="Q54XC4"/>
<dbReference type="FunCoup" id="Q54XC4">
    <property type="interactions" value="6"/>
</dbReference>
<dbReference type="STRING" id="44689.Q54XC4"/>
<dbReference type="PaxDb" id="44689-DDB0266394"/>
<dbReference type="EnsemblProtists" id="EAL67945">
    <property type="protein sequence ID" value="EAL67945"/>
    <property type="gene ID" value="DDB_G0279047"/>
</dbReference>
<dbReference type="GeneID" id="8621850"/>
<dbReference type="KEGG" id="ddi:DDB_G0279047"/>
<dbReference type="dictyBase" id="DDB_G0279047"/>
<dbReference type="VEuPathDB" id="AmoebaDB:DDB_G0279047"/>
<dbReference type="eggNOG" id="ENOG502SDM8">
    <property type="taxonomic scope" value="Eukaryota"/>
</dbReference>
<dbReference type="HOGENOM" id="CLU_1724647_0_0_1"/>
<dbReference type="InParanoid" id="Q54XC4"/>
<dbReference type="OMA" id="ETWAINI"/>
<dbReference type="PhylomeDB" id="Q54XC4"/>
<dbReference type="PRO" id="PR:Q54XC4"/>
<dbReference type="Proteomes" id="UP000002195">
    <property type="component" value="Chromosome 3"/>
</dbReference>
<dbReference type="GO" id="GO:0005615">
    <property type="term" value="C:extracellular space"/>
    <property type="evidence" value="ECO:0000318"/>
    <property type="project" value="GO_Central"/>
</dbReference>
<dbReference type="InterPro" id="IPR018887">
    <property type="entry name" value="MYDGF"/>
</dbReference>
<dbReference type="PANTHER" id="PTHR31230:SF1">
    <property type="entry name" value="MYELOID-DERIVED GROWTH FACTOR"/>
    <property type="match status" value="1"/>
</dbReference>
<dbReference type="PANTHER" id="PTHR31230">
    <property type="entry name" value="MYELOID-DERIVED GROWTH FACTOR MYDGF"/>
    <property type="match status" value="1"/>
</dbReference>
<dbReference type="Pfam" id="PF10572">
    <property type="entry name" value="UPF0556"/>
    <property type="match status" value="1"/>
</dbReference>
<evidence type="ECO:0000255" key="1"/>
<evidence type="ECO:0000305" key="2"/>
<keyword id="KW-1185">Reference proteome</keyword>
<keyword id="KW-0964">Secreted</keyword>
<keyword id="KW-0732">Signal</keyword>
<proteinExistence type="inferred from homology"/>
<protein>
    <recommendedName>
        <fullName>Myeloid-derived growth factor homolog</fullName>
    </recommendedName>
</protein>
<gene>
    <name type="ORF">DDB_G0279047</name>
</gene>
<name>MYDGF_DICDI</name>
<feature type="signal peptide" evidence="1">
    <location>
        <begin position="1"/>
        <end position="22"/>
    </location>
</feature>
<feature type="chain" id="PRO_0000328161" description="Myeloid-derived growth factor homolog">
    <location>
        <begin position="23"/>
        <end position="150"/>
    </location>
</feature>
<reference key="1">
    <citation type="journal article" date="2005" name="Nature">
        <title>The genome of the social amoeba Dictyostelium discoideum.</title>
        <authorList>
            <person name="Eichinger L."/>
            <person name="Pachebat J.A."/>
            <person name="Gloeckner G."/>
            <person name="Rajandream M.A."/>
            <person name="Sucgang R."/>
            <person name="Berriman M."/>
            <person name="Song J."/>
            <person name="Olsen R."/>
            <person name="Szafranski K."/>
            <person name="Xu Q."/>
            <person name="Tunggal B."/>
            <person name="Kummerfeld S."/>
            <person name="Madera M."/>
            <person name="Konfortov B.A."/>
            <person name="Rivero F."/>
            <person name="Bankier A.T."/>
            <person name="Lehmann R."/>
            <person name="Hamlin N."/>
            <person name="Davies R."/>
            <person name="Gaudet P."/>
            <person name="Fey P."/>
            <person name="Pilcher K."/>
            <person name="Chen G."/>
            <person name="Saunders D."/>
            <person name="Sodergren E.J."/>
            <person name="Davis P."/>
            <person name="Kerhornou A."/>
            <person name="Nie X."/>
            <person name="Hall N."/>
            <person name="Anjard C."/>
            <person name="Hemphill L."/>
            <person name="Bason N."/>
            <person name="Farbrother P."/>
            <person name="Desany B."/>
            <person name="Just E."/>
            <person name="Morio T."/>
            <person name="Rost R."/>
            <person name="Churcher C.M."/>
            <person name="Cooper J."/>
            <person name="Haydock S."/>
            <person name="van Driessche N."/>
            <person name="Cronin A."/>
            <person name="Goodhead I."/>
            <person name="Muzny D.M."/>
            <person name="Mourier T."/>
            <person name="Pain A."/>
            <person name="Lu M."/>
            <person name="Harper D."/>
            <person name="Lindsay R."/>
            <person name="Hauser H."/>
            <person name="James K.D."/>
            <person name="Quiles M."/>
            <person name="Madan Babu M."/>
            <person name="Saito T."/>
            <person name="Buchrieser C."/>
            <person name="Wardroper A."/>
            <person name="Felder M."/>
            <person name="Thangavelu M."/>
            <person name="Johnson D."/>
            <person name="Knights A."/>
            <person name="Loulseged H."/>
            <person name="Mungall K.L."/>
            <person name="Oliver K."/>
            <person name="Price C."/>
            <person name="Quail M.A."/>
            <person name="Urushihara H."/>
            <person name="Hernandez J."/>
            <person name="Rabbinowitsch E."/>
            <person name="Steffen D."/>
            <person name="Sanders M."/>
            <person name="Ma J."/>
            <person name="Kohara Y."/>
            <person name="Sharp S."/>
            <person name="Simmonds M.N."/>
            <person name="Spiegler S."/>
            <person name="Tivey A."/>
            <person name="Sugano S."/>
            <person name="White B."/>
            <person name="Walker D."/>
            <person name="Woodward J.R."/>
            <person name="Winckler T."/>
            <person name="Tanaka Y."/>
            <person name="Shaulsky G."/>
            <person name="Schleicher M."/>
            <person name="Weinstock G.M."/>
            <person name="Rosenthal A."/>
            <person name="Cox E.C."/>
            <person name="Chisholm R.L."/>
            <person name="Gibbs R.A."/>
            <person name="Loomis W.F."/>
            <person name="Platzer M."/>
            <person name="Kay R.R."/>
            <person name="Williams J.G."/>
            <person name="Dear P.H."/>
            <person name="Noegel A.A."/>
            <person name="Barrell B.G."/>
            <person name="Kuspa A."/>
        </authorList>
    </citation>
    <scope>NUCLEOTIDE SEQUENCE [LARGE SCALE GENOMIC DNA]</scope>
    <source>
        <strain>AX4</strain>
    </source>
</reference>
<sequence>MTFLKYLLILCTIFLMVTNSLSEEIDKEFNIKPEGNLDTVELVLENYKCIFSFAATGGTNENWKIFLTTENGVATCFIGRPKPISYLFFKQFSAQLINTKTGKSNIIPEISDNSGIMPLGDQYILTSDNKVVQSNNFAGNLAFLVLNSDK</sequence>
<accession>Q54XC4</accession>
<organism>
    <name type="scientific">Dictyostelium discoideum</name>
    <name type="common">Social amoeba</name>
    <dbReference type="NCBI Taxonomy" id="44689"/>
    <lineage>
        <taxon>Eukaryota</taxon>
        <taxon>Amoebozoa</taxon>
        <taxon>Evosea</taxon>
        <taxon>Eumycetozoa</taxon>
        <taxon>Dictyostelia</taxon>
        <taxon>Dictyosteliales</taxon>
        <taxon>Dictyosteliaceae</taxon>
        <taxon>Dictyostelium</taxon>
    </lineage>
</organism>